<name>CNO10_MACFA</name>
<proteinExistence type="evidence at transcript level"/>
<evidence type="ECO:0000250" key="1"/>
<evidence type="ECO:0000250" key="2">
    <source>
        <dbReference type="UniProtKB" id="Q9H9A5"/>
    </source>
</evidence>
<evidence type="ECO:0000255" key="3"/>
<evidence type="ECO:0000256" key="4">
    <source>
        <dbReference type="SAM" id="MobiDB-lite"/>
    </source>
</evidence>
<evidence type="ECO:0000305" key="5"/>
<organism>
    <name type="scientific">Macaca fascicularis</name>
    <name type="common">Crab-eating macaque</name>
    <name type="synonym">Cynomolgus monkey</name>
    <dbReference type="NCBI Taxonomy" id="9541"/>
    <lineage>
        <taxon>Eukaryota</taxon>
        <taxon>Metazoa</taxon>
        <taxon>Chordata</taxon>
        <taxon>Craniata</taxon>
        <taxon>Vertebrata</taxon>
        <taxon>Euteleostomi</taxon>
        <taxon>Mammalia</taxon>
        <taxon>Eutheria</taxon>
        <taxon>Euarchontoglires</taxon>
        <taxon>Primates</taxon>
        <taxon>Haplorrhini</taxon>
        <taxon>Catarrhini</taxon>
        <taxon>Cercopithecidae</taxon>
        <taxon>Cercopithecinae</taxon>
        <taxon>Macaca</taxon>
    </lineage>
</organism>
<dbReference type="EMBL" id="AB179418">
    <property type="protein sequence ID" value="BAE02469.1"/>
    <property type="molecule type" value="mRNA"/>
</dbReference>
<dbReference type="SMR" id="Q4R350"/>
<dbReference type="STRING" id="9541.ENSMFAP00000041623"/>
<dbReference type="eggNOG" id="KOG2471">
    <property type="taxonomic scope" value="Eukaryota"/>
</dbReference>
<dbReference type="Proteomes" id="UP000233100">
    <property type="component" value="Unplaced"/>
</dbReference>
<dbReference type="GO" id="GO:0030014">
    <property type="term" value="C:CCR4-NOT complex"/>
    <property type="evidence" value="ECO:0000250"/>
    <property type="project" value="UniProtKB"/>
</dbReference>
<dbReference type="GO" id="GO:0005737">
    <property type="term" value="C:cytoplasm"/>
    <property type="evidence" value="ECO:0007669"/>
    <property type="project" value="UniProtKB-SubCell"/>
</dbReference>
<dbReference type="GO" id="GO:0005634">
    <property type="term" value="C:nucleus"/>
    <property type="evidence" value="ECO:0007669"/>
    <property type="project" value="UniProtKB-SubCell"/>
</dbReference>
<dbReference type="GO" id="GO:0006402">
    <property type="term" value="P:mRNA catabolic process"/>
    <property type="evidence" value="ECO:0007669"/>
    <property type="project" value="TreeGrafter"/>
</dbReference>
<dbReference type="GO" id="GO:0017148">
    <property type="term" value="P:negative regulation of translation"/>
    <property type="evidence" value="ECO:0007669"/>
    <property type="project" value="TreeGrafter"/>
</dbReference>
<dbReference type="GO" id="GO:0031047">
    <property type="term" value="P:regulatory ncRNA-mediated gene silencing"/>
    <property type="evidence" value="ECO:0007669"/>
    <property type="project" value="UniProtKB-KW"/>
</dbReference>
<dbReference type="FunFam" id="1.25.40.10:FF:000092">
    <property type="entry name" value="CCR4-NOT transcription complex subunit 10 isoform X1"/>
    <property type="match status" value="1"/>
</dbReference>
<dbReference type="Gene3D" id="1.25.40.10">
    <property type="entry name" value="Tetratricopeptide repeat domain"/>
    <property type="match status" value="2"/>
</dbReference>
<dbReference type="InterPro" id="IPR039740">
    <property type="entry name" value="CNOT10"/>
</dbReference>
<dbReference type="InterPro" id="IPR011990">
    <property type="entry name" value="TPR-like_helical_dom_sf"/>
</dbReference>
<dbReference type="InterPro" id="IPR019734">
    <property type="entry name" value="TPR_rpt"/>
</dbReference>
<dbReference type="PANTHER" id="PTHR12979">
    <property type="entry name" value="CCR4-NOT TRANSCRIPTION COMPLEX SUBUNIT 10"/>
    <property type="match status" value="1"/>
</dbReference>
<dbReference type="PANTHER" id="PTHR12979:SF5">
    <property type="entry name" value="CCR4-NOT TRANSCRIPTION COMPLEX SUBUNIT 10"/>
    <property type="match status" value="1"/>
</dbReference>
<dbReference type="SMART" id="SM00028">
    <property type="entry name" value="TPR"/>
    <property type="match status" value="4"/>
</dbReference>
<dbReference type="SUPFAM" id="SSF48452">
    <property type="entry name" value="TPR-like"/>
    <property type="match status" value="3"/>
</dbReference>
<reference key="1">
    <citation type="submission" date="2005-06" db="EMBL/GenBank/DDBJ databases">
        <title>DNA sequences of macaque genes expressed in brain or testis and its evolutionary implications.</title>
        <authorList>
            <consortium name="International consortium for macaque cDNA sequencing and analysis"/>
        </authorList>
    </citation>
    <scope>NUCLEOTIDE SEQUENCE [LARGE SCALE MRNA]</scope>
    <source>
        <tissue>Testis</tissue>
    </source>
</reference>
<comment type="function">
    <text evidence="1">Component of the CCR4-NOT complex which is one of the major cellular mRNA deadenylases and is linked to various cellular processes including bulk mRNA degradation, miRNA-mediated repression, translational repression during translational initiation and general transcription regulation. Additional complex functions may be a consequence of its influence on mRNA expression. Is not required for association of CNOT7 to the CCR4-NOT complex (By similarity).</text>
</comment>
<comment type="subunit">
    <text evidence="1">Component of the CCR4-NOT complex; distinct complexes seem to exist that differ in the participation of probably mutually exclusive catalytic subunits. CNOT10 and CNOT11 form a subcomplex docked to the CNOT1 scaffold (By similarity).</text>
</comment>
<comment type="subcellular location">
    <subcellularLocation>
        <location evidence="1">Cytoplasm</location>
    </subcellularLocation>
    <subcellularLocation>
        <location evidence="1">Nucleus</location>
    </subcellularLocation>
</comment>
<comment type="similarity">
    <text evidence="5">Belongs to the CNOT10 family.</text>
</comment>
<gene>
    <name type="primary">CNOT10</name>
    <name type="ORF">QtsA-19593</name>
</gene>
<accession>Q4R350</accession>
<keyword id="KW-0007">Acetylation</keyword>
<keyword id="KW-0175">Coiled coil</keyword>
<keyword id="KW-0963">Cytoplasm</keyword>
<keyword id="KW-0539">Nucleus</keyword>
<keyword id="KW-1185">Reference proteome</keyword>
<keyword id="KW-0943">RNA-mediated gene silencing</keyword>
<keyword id="KW-0804">Transcription</keyword>
<keyword id="KW-0805">Transcription regulation</keyword>
<keyword id="KW-0810">Translation regulation</keyword>
<sequence>MAADKPADQGAEKHEGTGQSSGITDQEKELSTNAFQAFTSGNYDACLQHLACLQDINKDDYKIILNTAVAEFFKSNQTTTDNLRQTLNQLKNQVHSAVEEMDGLDDVENSMLYYNQAVILYHLRQYTEAISVGEKLYQFIEPFEEKFAQAVCFLLVDLYILTYQAEKALHLLAVLEKMISQGNNNKNGKNETGNNNNKDGSNHKAESGALIEAAKSKIHQYIVRAYIQMKSLKACKREIKSVMNTAGNSAPSLFLKSNFEYLRGNYRKAVKLLNSSNIAEHPGFMKTGECLRCMFWNNLGCIHFAMSKHNLGIFYFKKALQENDNVCAQLSAGSTDPGKKFSGRPMCTLLTNKRYELLYNCGIQLLHIGRPLAAFECLIEAVQVYHANPRLWLRLAECCIAANKGTSEQETKGLPSKKGIVQSIVGQGYHRKIVLASQSIQNTVYNDGQSSAIPVASMEFAAICLRNALLLLPEEQQDPKQENGAKNSNQLGGNTESSESSETCSSKSHDGDKFIPAPPSSPLRKQELENLKCSILACSAYVALALGDNLMALNHADKLLQQPKLSGSLKFLGHLYAAEALISLDRISDAITHLNPENVTDVSLGISSNEQDQGSDKGENEAMESSGKRAPQCYPSSVNSARTVMLFNLGSAYCLRSEYDKARKCLHQAASMIHPKEVPPEAILLAVYLELQNGNTQLALQIIKRNQLLPAVKTHSEVRKKPVFQPVHPIQPIQMPAFTTVQRK</sequence>
<feature type="initiator methionine" description="Removed" evidence="2">
    <location>
        <position position="1"/>
    </location>
</feature>
<feature type="chain" id="PRO_0000314580" description="CCR4-NOT transcription complex subunit 10">
    <location>
        <begin position="2"/>
        <end position="744"/>
    </location>
</feature>
<feature type="region of interest" description="Disordered" evidence="4">
    <location>
        <begin position="1"/>
        <end position="25"/>
    </location>
</feature>
<feature type="region of interest" description="Disordered" evidence="4">
    <location>
        <begin position="183"/>
        <end position="204"/>
    </location>
</feature>
<feature type="region of interest" description="Disordered" evidence="4">
    <location>
        <begin position="477"/>
        <end position="521"/>
    </location>
</feature>
<feature type="region of interest" description="Disordered" evidence="4">
    <location>
        <begin position="602"/>
        <end position="634"/>
    </location>
</feature>
<feature type="coiled-coil region" evidence="3">
    <location>
        <begin position="74"/>
        <end position="107"/>
    </location>
</feature>
<feature type="compositionally biased region" description="Basic and acidic residues" evidence="4">
    <location>
        <begin position="1"/>
        <end position="16"/>
    </location>
</feature>
<feature type="compositionally biased region" description="Low complexity" evidence="4">
    <location>
        <begin position="183"/>
        <end position="199"/>
    </location>
</feature>
<feature type="compositionally biased region" description="Polar residues" evidence="4">
    <location>
        <begin position="484"/>
        <end position="495"/>
    </location>
</feature>
<feature type="compositionally biased region" description="Low complexity" evidence="4">
    <location>
        <begin position="496"/>
        <end position="506"/>
    </location>
</feature>
<feature type="compositionally biased region" description="Polar residues" evidence="4">
    <location>
        <begin position="602"/>
        <end position="612"/>
    </location>
</feature>
<feature type="modified residue" description="N-acetylalanine" evidence="2">
    <location>
        <position position="2"/>
    </location>
</feature>
<protein>
    <recommendedName>
        <fullName>CCR4-NOT transcription complex subunit 10</fullName>
    </recommendedName>
</protein>